<accession>Q4WJI7</accession>
<name>BTAF1_ASPFU</name>
<protein>
    <recommendedName>
        <fullName evidence="1">TATA-binding protein-associated factor mot1</fullName>
        <shortName evidence="1">TBP-associated factor mot1</shortName>
        <ecNumber evidence="1">3.6.4.-</ecNumber>
    </recommendedName>
    <alternativeName>
        <fullName evidence="1">Modifier of transcription 1</fullName>
    </alternativeName>
    <alternativeName>
        <fullName evidence="7">NCT transcriptional regulatory complex subunit mot1</fullName>
    </alternativeName>
</protein>
<keyword id="KW-0067">ATP-binding</keyword>
<keyword id="KW-0238">DNA-binding</keyword>
<keyword id="KW-0347">Helicase</keyword>
<keyword id="KW-0378">Hydrolase</keyword>
<keyword id="KW-0547">Nucleotide-binding</keyword>
<keyword id="KW-0539">Nucleus</keyword>
<keyword id="KW-1185">Reference proteome</keyword>
<keyword id="KW-0677">Repeat</keyword>
<keyword id="KW-0804">Transcription</keyword>
<keyword id="KW-0805">Transcription regulation</keyword>
<evidence type="ECO:0000250" key="1">
    <source>
        <dbReference type="UniProtKB" id="P32333"/>
    </source>
</evidence>
<evidence type="ECO:0000255" key="2"/>
<evidence type="ECO:0000255" key="3">
    <source>
        <dbReference type="PROSITE-ProRule" id="PRU00541"/>
    </source>
</evidence>
<evidence type="ECO:0000255" key="4">
    <source>
        <dbReference type="PROSITE-ProRule" id="PRU00542"/>
    </source>
</evidence>
<evidence type="ECO:0000256" key="5">
    <source>
        <dbReference type="SAM" id="MobiDB-lite"/>
    </source>
</evidence>
<evidence type="ECO:0000269" key="6">
    <source>
    </source>
</evidence>
<evidence type="ECO:0000303" key="7">
    <source>
    </source>
</evidence>
<evidence type="ECO:0000305" key="8"/>
<evidence type="ECO:0000305" key="9">
    <source>
    </source>
</evidence>
<sequence length="1891" mass="210167">MTSRLLETGSTPFIRNTAAQQLADVQKQHPDELFNLLGRILPYLRSKSWDTRAAAAKAIGLIVANADTFDPNQDDGQEIKKAENDDLDVDIKSEEELLSPMDDSLLQLERLDLPSILKYGKRLLGSAGKEYEYSLAAMDPASRLQHQKKTLTSRLGLAGEYIEEDLINDNDLVSKPVVKEEPSFVASREHSIQGTSQPLASPIEPANGEESGLSKRQLNQLKRKNKQSARMGANKVRVVDLSSRRASENVTTPSVATPYPIKSENGEERNGDSKPDYFSLDRSAGDDESKIVSEFKGASVPENPLLQPESTEEGPNPNWPFELMCDILMVDLFDPNWEIRHGAAMALREVIRIQGAGAGRVQGKSRAENDILNRKWLDDLACRLLCVLMLDRFGDYISDNVVAPIRETVGQTLGALLSQLPSRSVISVYKCLYRIIMQTDLGLERPIWEVCHGGMIGLRYLVAVRKDLLIKDSKLMDGVLEAVMKGLGDYDDDVRAVSAATLVPIAEEFVKTRQSTLGTLMTIVWDCLSNLQDDLSASTGSVMDLLAKLCTFQEVLDAMKANAAVNPESSFGKLVPRLYPFLRHTITSVRSAVLRALMTFLQLEGEGTDEWVDGKTVRLIFQNLLVERNEGVLKQSLQVWSELLNSLETRGSFKSESDLLSHIKPLITLSMGPFGVPRYPVPMDASLFIKPSGLPFPSSAAAPARSSPASNTPEGTKGRRRKSEKKEAPPPSAHNVDGHMLQGDIDLVGADTMLRSKIYAARALGQLLFVWDQNQLPSLWQSILEGLNHSASTSQLASAMIVEEYAKLSGPSGRYASTLCENLRPIIEGERPPWYSDIACYLHVARAQCHSLLNTFRDHAHVPGSRLPVLAVIVQGDPEAGPNAFSLSDAEKVIGPDFERLKKGLTPAQRITALQVLNDTRATAESAVNEARNAREQRDLRVRAAAAGALVALSDIPKKPSHIIKGMMDSIKKEENAELQQRSATAITSLVEYYTTSAKRGPVDKVIGNLVKYCCVDTSETPEFHHNAMLEKSILSLRKEEDRRDHPDAAKFEREAKEARIMRRGAKEALEQLAVKFGSELMAKVPNLASLIERPLKEALAADELPANIRDPENELGQEVVDGLSTLRAILPKFHSGLYPWVVDLLPLVVKALQCNLSVIRYAAAKCFATICSVITVEGMTMLVEKVLPMINDALDVHHRQGAVECIYHLIHVMEDGILPYVIFLVVPVLGRMSDSDNEVRLLATTSFATLVKLVPLEAGIPDPPGLSEELLKGRDRERQFMAQMLDVRKVEEFKIPVAIKAELRPYQQEGVNWLAFLNRYNLHGILCDDMGLGKTLQTICIVASDHHMRAEEFARTQKPEVRKLPSLIVCPPSLSGHWQQELKQYAPFLNCVAYVGPPAERSRLQSALPNADIVVTSYDICRNDNEVLNPINWNYCVLDEGHLIKNPKAKATIAVKRLLSNHRLILSGTPIQNNVLELWSLFDFLMPGFLGTEKVFLDRFAKPIAASRFSKSSSKEQEAGALAIEALHKQVLPFLLRRLKEEVLNDLPPKIIQNYYCDPSELQRKLFEDFTKKEQKALQDKVGSTEKADKEHIFQALQYMRRLCNSPALVVKEGHKQYNEVQQYLAAKHSNIRDVAHAPKLSALRDLLIDCGIGVDSPSEGDLSGASYVSPHRALIFCQMKEMLDIVQSEVFNKLLPSVQFLRLDGSVEATRRQDIVNRFNTDPSYDVLLLTTSVGGLGLNLTGADTVIFVEHDWNPQKDIQAMDRAHRIGQKKVVNVYRLITRGTLEEKILNLQRFKIDVASTVVNQQNAGLGTMDTDQLLDLFNLGETAETAEKPSDAAGNEVDMVDIDGNVKEKGKKGWLDDLGELWDDRQYQEEYNLDSFLATMKG</sequence>
<comment type="function">
    <text evidence="1 6">Regulates transcription in association with TATA binding protein (TBP). Removes TBP from the TATA box via its C-terminal ATPase activity. Both transcription activation and repression require its ATPase activity (By similarity). Part of the NCT transcriptional regulatory complex that acts as a key regulator of ergosterol biosynthesis and the azole exporter cdr1B (PubMed:31969561). The NCT complex binds the promoters of genes linked to azole susceptibility, and especially represses the expression of cdr1B transporter (PubMed:31969561).</text>
</comment>
<comment type="subunit">
    <text evidence="6">Forms the NCT transcriptional regulatory complex with nctA and nctB.</text>
</comment>
<comment type="subcellular location">
    <subcellularLocation>
        <location evidence="9">Nucleus</location>
    </subcellularLocation>
</comment>
<comment type="similarity">
    <text evidence="8">Belongs to the SNF2/RAD54 helicase family.</text>
</comment>
<proteinExistence type="evidence at protein level"/>
<feature type="chain" id="PRO_0000449616" description="TATA-binding protein-associated factor mot1">
    <location>
        <begin position="1"/>
        <end position="1891"/>
    </location>
</feature>
<feature type="repeat" description="HEAT 1" evidence="2">
    <location>
        <begin position="30"/>
        <end position="68"/>
    </location>
</feature>
<feature type="repeat" description="HEAT 2" evidence="2">
    <location>
        <begin position="473"/>
        <end position="511"/>
    </location>
</feature>
<feature type="repeat" description="HEAT 3" evidence="2">
    <location>
        <begin position="569"/>
        <end position="606"/>
    </location>
</feature>
<feature type="repeat" description="HEAT 4" evidence="2">
    <location>
        <begin position="957"/>
        <end position="996"/>
    </location>
</feature>
<feature type="repeat" description="HEAT 5" evidence="2">
    <location>
        <begin position="1139"/>
        <end position="1177"/>
    </location>
</feature>
<feature type="repeat" description="HEAT 6" evidence="2">
    <location>
        <begin position="1181"/>
        <end position="1216"/>
    </location>
</feature>
<feature type="repeat" description="HEAT 7" evidence="2">
    <location>
        <begin position="1219"/>
        <end position="1257"/>
    </location>
</feature>
<feature type="domain" description="Helicase ATP-binding" evidence="3">
    <location>
        <begin position="1316"/>
        <end position="1489"/>
    </location>
</feature>
<feature type="repeat" description="HEAT 8" evidence="2">
    <location>
        <begin position="1526"/>
        <end position="1565"/>
    </location>
</feature>
<feature type="domain" description="Helicase C-terminal" evidence="4">
    <location>
        <begin position="1663"/>
        <end position="1813"/>
    </location>
</feature>
<feature type="region of interest" description="Disordered" evidence="5">
    <location>
        <begin position="184"/>
        <end position="216"/>
    </location>
</feature>
<feature type="region of interest" description="Disordered" evidence="5">
    <location>
        <begin position="241"/>
        <end position="283"/>
    </location>
</feature>
<feature type="region of interest" description="Disordered" evidence="5">
    <location>
        <begin position="295"/>
        <end position="316"/>
    </location>
</feature>
<feature type="region of interest" description="Disordered" evidence="5">
    <location>
        <begin position="699"/>
        <end position="740"/>
    </location>
</feature>
<feature type="short sequence motif" description="DEAH box" evidence="3">
    <location>
        <begin position="1440"/>
        <end position="1443"/>
    </location>
</feature>
<feature type="compositionally biased region" description="Basic and acidic residues" evidence="5">
    <location>
        <begin position="264"/>
        <end position="275"/>
    </location>
</feature>
<feature type="compositionally biased region" description="Low complexity" evidence="5">
    <location>
        <begin position="699"/>
        <end position="710"/>
    </location>
</feature>
<feature type="binding site" evidence="3">
    <location>
        <begin position="1329"/>
        <end position="1336"/>
    </location>
    <ligand>
        <name>ATP</name>
        <dbReference type="ChEBI" id="CHEBI:30616"/>
    </ligand>
</feature>
<gene>
    <name evidence="7" type="primary">mot1</name>
    <name type="ORF">AFUA_1G05830</name>
</gene>
<reference key="1">
    <citation type="journal article" date="2005" name="Nature">
        <title>Genomic sequence of the pathogenic and allergenic filamentous fungus Aspergillus fumigatus.</title>
        <authorList>
            <person name="Nierman W.C."/>
            <person name="Pain A."/>
            <person name="Anderson M.J."/>
            <person name="Wortman J.R."/>
            <person name="Kim H.S."/>
            <person name="Arroyo J."/>
            <person name="Berriman M."/>
            <person name="Abe K."/>
            <person name="Archer D.B."/>
            <person name="Bermejo C."/>
            <person name="Bennett J.W."/>
            <person name="Bowyer P."/>
            <person name="Chen D."/>
            <person name="Collins M."/>
            <person name="Coulsen R."/>
            <person name="Davies R."/>
            <person name="Dyer P.S."/>
            <person name="Farman M.L."/>
            <person name="Fedorova N."/>
            <person name="Fedorova N.D."/>
            <person name="Feldblyum T.V."/>
            <person name="Fischer R."/>
            <person name="Fosker N."/>
            <person name="Fraser A."/>
            <person name="Garcia J.L."/>
            <person name="Garcia M.J."/>
            <person name="Goble A."/>
            <person name="Goldman G.H."/>
            <person name="Gomi K."/>
            <person name="Griffith-Jones S."/>
            <person name="Gwilliam R."/>
            <person name="Haas B.J."/>
            <person name="Haas H."/>
            <person name="Harris D.E."/>
            <person name="Horiuchi H."/>
            <person name="Huang J."/>
            <person name="Humphray S."/>
            <person name="Jimenez J."/>
            <person name="Keller N."/>
            <person name="Khouri H."/>
            <person name="Kitamoto K."/>
            <person name="Kobayashi T."/>
            <person name="Konzack S."/>
            <person name="Kulkarni R."/>
            <person name="Kumagai T."/>
            <person name="Lafton A."/>
            <person name="Latge J.-P."/>
            <person name="Li W."/>
            <person name="Lord A."/>
            <person name="Lu C."/>
            <person name="Majoros W.H."/>
            <person name="May G.S."/>
            <person name="Miller B.L."/>
            <person name="Mohamoud Y."/>
            <person name="Molina M."/>
            <person name="Monod M."/>
            <person name="Mouyna I."/>
            <person name="Mulligan S."/>
            <person name="Murphy L.D."/>
            <person name="O'Neil S."/>
            <person name="Paulsen I."/>
            <person name="Penalva M.A."/>
            <person name="Pertea M."/>
            <person name="Price C."/>
            <person name="Pritchard B.L."/>
            <person name="Quail M.A."/>
            <person name="Rabbinowitsch E."/>
            <person name="Rawlins N."/>
            <person name="Rajandream M.A."/>
            <person name="Reichard U."/>
            <person name="Renauld H."/>
            <person name="Robson G.D."/>
            <person name="Rodriguez de Cordoba S."/>
            <person name="Rodriguez-Pena J.M."/>
            <person name="Ronning C.M."/>
            <person name="Rutter S."/>
            <person name="Salzberg S.L."/>
            <person name="Sanchez M."/>
            <person name="Sanchez-Ferrero J.C."/>
            <person name="Saunders D."/>
            <person name="Seeger K."/>
            <person name="Squares R."/>
            <person name="Squares S."/>
            <person name="Takeuchi M."/>
            <person name="Tekaia F."/>
            <person name="Turner G."/>
            <person name="Vazquez de Aldana C.R."/>
            <person name="Weidman J."/>
            <person name="White O."/>
            <person name="Woodward J.R."/>
            <person name="Yu J.-H."/>
            <person name="Fraser C.M."/>
            <person name="Galagan J.E."/>
            <person name="Asai K."/>
            <person name="Machida M."/>
            <person name="Hall N."/>
            <person name="Barrell B.G."/>
            <person name="Denning D.W."/>
        </authorList>
    </citation>
    <scope>NUCLEOTIDE SEQUENCE [LARGE SCALE GENOMIC DNA]</scope>
    <source>
        <strain>ATCC MYA-4609 / CBS 101355 / FGSC A1100 / Af293</strain>
    </source>
</reference>
<reference key="2">
    <citation type="journal article" date="2020" name="Nat. Commun.">
        <title>The negative cofactor 2 complex is a key regulator of drug resistance in Aspergillus fumigatus.</title>
        <authorList>
            <person name="Furukawa T."/>
            <person name="van Rhijn N."/>
            <person name="Fraczek M."/>
            <person name="Gsaller F."/>
            <person name="Davies E."/>
            <person name="Carr P."/>
            <person name="Gago S."/>
            <person name="Fortune-Grant R."/>
            <person name="Rahman S."/>
            <person name="Gilsenan J.M."/>
            <person name="Houlder E."/>
            <person name="Kowalski C.H."/>
            <person name="Raj S."/>
            <person name="Paul S."/>
            <person name="Cook P."/>
            <person name="Parker J.E."/>
            <person name="Kelly S."/>
            <person name="Cramer R.A."/>
            <person name="Latge J.P."/>
            <person name="Moye-Rowley S."/>
            <person name="Bignell E."/>
            <person name="Bowyer P."/>
            <person name="Bromley M.J."/>
        </authorList>
    </citation>
    <scope>FUNCTION</scope>
    <scope>INTERACTION WITH NCTA AND NCTB</scope>
    <scope>SUBCELLULAR LOCATION</scope>
</reference>
<dbReference type="EC" id="3.6.4.-" evidence="1"/>
<dbReference type="EMBL" id="AAHF01000007">
    <property type="protein sequence ID" value="EAL88295.1"/>
    <property type="molecule type" value="Genomic_DNA"/>
</dbReference>
<dbReference type="RefSeq" id="XP_750333.1">
    <property type="nucleotide sequence ID" value="XM_745240.1"/>
</dbReference>
<dbReference type="SMR" id="Q4WJI7"/>
<dbReference type="FunCoup" id="Q4WJI7">
    <property type="interactions" value="1326"/>
</dbReference>
<dbReference type="STRING" id="330879.Q4WJI7"/>
<dbReference type="EnsemblFungi" id="EAL88295">
    <property type="protein sequence ID" value="EAL88295"/>
    <property type="gene ID" value="AFUA_1G05830"/>
</dbReference>
<dbReference type="GeneID" id="3507592"/>
<dbReference type="KEGG" id="afm:AFUA_1G05830"/>
<dbReference type="eggNOG" id="KOG0392">
    <property type="taxonomic scope" value="Eukaryota"/>
</dbReference>
<dbReference type="HOGENOM" id="CLU_000315_1_0_1"/>
<dbReference type="InParanoid" id="Q4WJI7"/>
<dbReference type="OMA" id="WYSDIAC"/>
<dbReference type="OrthoDB" id="10252227at2759"/>
<dbReference type="Proteomes" id="UP000002530">
    <property type="component" value="Chromosome 1"/>
</dbReference>
<dbReference type="GO" id="GO:0000228">
    <property type="term" value="C:nuclear chromosome"/>
    <property type="evidence" value="ECO:0007669"/>
    <property type="project" value="EnsemblFungi"/>
</dbReference>
<dbReference type="GO" id="GO:0005667">
    <property type="term" value="C:transcription regulator complex"/>
    <property type="evidence" value="ECO:0007669"/>
    <property type="project" value="EnsemblFungi"/>
</dbReference>
<dbReference type="GO" id="GO:0005524">
    <property type="term" value="F:ATP binding"/>
    <property type="evidence" value="ECO:0007669"/>
    <property type="project" value="UniProtKB-KW"/>
</dbReference>
<dbReference type="GO" id="GO:0016887">
    <property type="term" value="F:ATP hydrolysis activity"/>
    <property type="evidence" value="ECO:0007669"/>
    <property type="project" value="EnsemblFungi"/>
</dbReference>
<dbReference type="GO" id="GO:0003677">
    <property type="term" value="F:DNA binding"/>
    <property type="evidence" value="ECO:0007669"/>
    <property type="project" value="UniProtKB-KW"/>
</dbReference>
<dbReference type="GO" id="GO:0004386">
    <property type="term" value="F:helicase activity"/>
    <property type="evidence" value="ECO:0007669"/>
    <property type="project" value="UniProtKB-KW"/>
</dbReference>
<dbReference type="GO" id="GO:0017025">
    <property type="term" value="F:TBP-class protein binding"/>
    <property type="evidence" value="ECO:0007669"/>
    <property type="project" value="EnsemblFungi"/>
</dbReference>
<dbReference type="GO" id="GO:0045892">
    <property type="term" value="P:negative regulation of DNA-templated transcription"/>
    <property type="evidence" value="ECO:0007669"/>
    <property type="project" value="EnsemblFungi"/>
</dbReference>
<dbReference type="GO" id="GO:0042790">
    <property type="term" value="P:nucleolar large rRNA transcription by RNA polymerase I"/>
    <property type="evidence" value="ECO:0007669"/>
    <property type="project" value="EnsemblFungi"/>
</dbReference>
<dbReference type="GO" id="GO:0045898">
    <property type="term" value="P:regulation of RNA polymerase II transcription preinitiation complex assembly"/>
    <property type="evidence" value="ECO:0007669"/>
    <property type="project" value="EnsemblFungi"/>
</dbReference>
<dbReference type="GO" id="GO:0006364">
    <property type="term" value="P:rRNA processing"/>
    <property type="evidence" value="ECO:0007669"/>
    <property type="project" value="EnsemblFungi"/>
</dbReference>
<dbReference type="CDD" id="cd17999">
    <property type="entry name" value="DEXHc_Mot1"/>
    <property type="match status" value="1"/>
</dbReference>
<dbReference type="CDD" id="cd18793">
    <property type="entry name" value="SF2_C_SNF"/>
    <property type="match status" value="1"/>
</dbReference>
<dbReference type="FunFam" id="3.40.50.10810:FF:000009">
    <property type="entry name" value="B-TFIID TATA-box-binding protein-associated factor 1"/>
    <property type="match status" value="1"/>
</dbReference>
<dbReference type="FunFam" id="1.25.10.10:FF:000508">
    <property type="entry name" value="Probable helicase mot1"/>
    <property type="match status" value="1"/>
</dbReference>
<dbReference type="FunFam" id="1.25.10.10:FF:000445">
    <property type="entry name" value="Related to MOT1-transcriptional accessory protein"/>
    <property type="match status" value="1"/>
</dbReference>
<dbReference type="FunFam" id="3.40.50.300:FF:000428">
    <property type="entry name" value="TATA-binding protein-associated factor 172"/>
    <property type="match status" value="1"/>
</dbReference>
<dbReference type="Gene3D" id="1.25.10.10">
    <property type="entry name" value="Leucine-rich Repeat Variant"/>
    <property type="match status" value="2"/>
</dbReference>
<dbReference type="Gene3D" id="3.40.50.300">
    <property type="entry name" value="P-loop containing nucleotide triphosphate hydrolases"/>
    <property type="match status" value="1"/>
</dbReference>
<dbReference type="Gene3D" id="3.40.50.10810">
    <property type="entry name" value="Tandem AAA-ATPase domain"/>
    <property type="match status" value="1"/>
</dbReference>
<dbReference type="InterPro" id="IPR011989">
    <property type="entry name" value="ARM-like"/>
</dbReference>
<dbReference type="InterPro" id="IPR016024">
    <property type="entry name" value="ARM-type_fold"/>
</dbReference>
<dbReference type="InterPro" id="IPR014001">
    <property type="entry name" value="Helicase_ATP-bd"/>
</dbReference>
<dbReference type="InterPro" id="IPR001650">
    <property type="entry name" value="Helicase_C-like"/>
</dbReference>
<dbReference type="InterPro" id="IPR044972">
    <property type="entry name" value="Mot1"/>
</dbReference>
<dbReference type="InterPro" id="IPR044078">
    <property type="entry name" value="Mot1_ATP-bd"/>
</dbReference>
<dbReference type="InterPro" id="IPR022707">
    <property type="entry name" value="Mot1_central_dom"/>
</dbReference>
<dbReference type="InterPro" id="IPR027417">
    <property type="entry name" value="P-loop_NTPase"/>
</dbReference>
<dbReference type="InterPro" id="IPR038718">
    <property type="entry name" value="SNF2-like_sf"/>
</dbReference>
<dbReference type="InterPro" id="IPR049730">
    <property type="entry name" value="SNF2/RAD54-like_C"/>
</dbReference>
<dbReference type="InterPro" id="IPR000330">
    <property type="entry name" value="SNF2_N"/>
</dbReference>
<dbReference type="PANTHER" id="PTHR36498">
    <property type="entry name" value="TATA-BINDING PROTEIN-ASSOCIATED FACTOR 172"/>
    <property type="match status" value="1"/>
</dbReference>
<dbReference type="PANTHER" id="PTHR36498:SF1">
    <property type="entry name" value="TATA-BINDING PROTEIN-ASSOCIATED FACTOR 172"/>
    <property type="match status" value="1"/>
</dbReference>
<dbReference type="Pfam" id="PF12054">
    <property type="entry name" value="DUF3535"/>
    <property type="match status" value="1"/>
</dbReference>
<dbReference type="Pfam" id="PF00271">
    <property type="entry name" value="Helicase_C"/>
    <property type="match status" value="1"/>
</dbReference>
<dbReference type="Pfam" id="PF00176">
    <property type="entry name" value="SNF2-rel_dom"/>
    <property type="match status" value="1"/>
</dbReference>
<dbReference type="SMART" id="SM00487">
    <property type="entry name" value="DEXDc"/>
    <property type="match status" value="1"/>
</dbReference>
<dbReference type="SMART" id="SM00490">
    <property type="entry name" value="HELICc"/>
    <property type="match status" value="1"/>
</dbReference>
<dbReference type="SUPFAM" id="SSF48371">
    <property type="entry name" value="ARM repeat"/>
    <property type="match status" value="2"/>
</dbReference>
<dbReference type="SUPFAM" id="SSF52540">
    <property type="entry name" value="P-loop containing nucleoside triphosphate hydrolases"/>
    <property type="match status" value="2"/>
</dbReference>
<dbReference type="PROSITE" id="PS51192">
    <property type="entry name" value="HELICASE_ATP_BIND_1"/>
    <property type="match status" value="1"/>
</dbReference>
<dbReference type="PROSITE" id="PS51194">
    <property type="entry name" value="HELICASE_CTER"/>
    <property type="match status" value="1"/>
</dbReference>
<organism>
    <name type="scientific">Aspergillus fumigatus (strain ATCC MYA-4609 / CBS 101355 / FGSC A1100 / Af293)</name>
    <name type="common">Neosartorya fumigata</name>
    <dbReference type="NCBI Taxonomy" id="330879"/>
    <lineage>
        <taxon>Eukaryota</taxon>
        <taxon>Fungi</taxon>
        <taxon>Dikarya</taxon>
        <taxon>Ascomycota</taxon>
        <taxon>Pezizomycotina</taxon>
        <taxon>Eurotiomycetes</taxon>
        <taxon>Eurotiomycetidae</taxon>
        <taxon>Eurotiales</taxon>
        <taxon>Aspergillaceae</taxon>
        <taxon>Aspergillus</taxon>
        <taxon>Aspergillus subgen. Fumigati</taxon>
    </lineage>
</organism>